<feature type="chain" id="PRO_0000367986" description="Probable protein phosphatase 2C 64">
    <location>
        <begin position="1"/>
        <end position="400"/>
    </location>
</feature>
<feature type="domain" description="PPM-type phosphatase" evidence="3">
    <location>
        <begin position="47"/>
        <end position="355"/>
    </location>
</feature>
<feature type="binding site" evidence="1">
    <location>
        <position position="86"/>
    </location>
    <ligand>
        <name>Mn(2+)</name>
        <dbReference type="ChEBI" id="CHEBI:29035"/>
        <label>1</label>
    </ligand>
</feature>
<feature type="binding site" evidence="1">
    <location>
        <position position="86"/>
    </location>
    <ligand>
        <name>Mn(2+)</name>
        <dbReference type="ChEBI" id="CHEBI:29035"/>
        <label>2</label>
    </ligand>
</feature>
<feature type="binding site" evidence="1">
    <location>
        <position position="87"/>
    </location>
    <ligand>
        <name>Mn(2+)</name>
        <dbReference type="ChEBI" id="CHEBI:29035"/>
        <label>1</label>
    </ligand>
</feature>
<feature type="binding site" evidence="1">
    <location>
        <position position="287"/>
    </location>
    <ligand>
        <name>Mn(2+)</name>
        <dbReference type="ChEBI" id="CHEBI:29035"/>
        <label>2</label>
    </ligand>
</feature>
<feature type="binding site" evidence="1">
    <location>
        <position position="346"/>
    </location>
    <ligand>
        <name>Mn(2+)</name>
        <dbReference type="ChEBI" id="CHEBI:29035"/>
        <label>2</label>
    </ligand>
</feature>
<feature type="modified residue" description="Phosphoserine" evidence="2">
    <location>
        <position position="75"/>
    </location>
</feature>
<feature type="sequence conflict" description="In Ref. 3; AAL32532." evidence="7" ref="3">
    <original>R</original>
    <variation>S</variation>
    <location>
        <position position="38"/>
    </location>
</feature>
<evidence type="ECO:0000250" key="1">
    <source>
        <dbReference type="UniProtKB" id="P35813"/>
    </source>
</evidence>
<evidence type="ECO:0000250" key="2">
    <source>
        <dbReference type="UniProtKB" id="Q9LHJ9"/>
    </source>
</evidence>
<evidence type="ECO:0000255" key="3">
    <source>
        <dbReference type="PROSITE-ProRule" id="PRU01082"/>
    </source>
</evidence>
<evidence type="ECO:0000269" key="4">
    <source>
    </source>
</evidence>
<evidence type="ECO:0000303" key="5">
    <source>
    </source>
</evidence>
<evidence type="ECO:0000303" key="6">
    <source>
    </source>
</evidence>
<evidence type="ECO:0000305" key="7"/>
<evidence type="ECO:0000312" key="8">
    <source>
        <dbReference type="Araport" id="AT4G38520"/>
    </source>
</evidence>
<evidence type="ECO:0000312" key="9">
    <source>
        <dbReference type="EMBL" id="CAB37508.1"/>
    </source>
</evidence>
<accession>Q5PNS9</accession>
<accession>Q8W4N8</accession>
<accession>Q9SZN2</accession>
<keyword id="KW-0378">Hydrolase</keyword>
<keyword id="KW-0460">Magnesium</keyword>
<keyword id="KW-0464">Manganese</keyword>
<keyword id="KW-0479">Metal-binding</keyword>
<keyword id="KW-0597">Phosphoprotein</keyword>
<keyword id="KW-0904">Protein phosphatase</keyword>
<keyword id="KW-1185">Reference proteome</keyword>
<gene>
    <name evidence="5" type="primary">PP2C64</name>
    <name evidence="6" type="synonym">PP2C-D5</name>
    <name evidence="8" type="ordered locus">At4g38520</name>
    <name evidence="9" type="ORF">F20M13.80</name>
</gene>
<protein>
    <recommendedName>
        <fullName evidence="5">Probable protein phosphatase 2C 64</fullName>
        <shortName evidence="5">AtPP2C64</shortName>
        <ecNumber evidence="2">3.1.3.16</ecNumber>
    </recommendedName>
</protein>
<dbReference type="EC" id="3.1.3.16" evidence="2"/>
<dbReference type="EMBL" id="AL035540">
    <property type="protein sequence ID" value="CAB37508.1"/>
    <property type="status" value="ALT_INIT"/>
    <property type="molecule type" value="Genomic_DNA"/>
</dbReference>
<dbReference type="EMBL" id="AL161593">
    <property type="protein sequence ID" value="CAB80516.1"/>
    <property type="status" value="ALT_INIT"/>
    <property type="molecule type" value="Genomic_DNA"/>
</dbReference>
<dbReference type="EMBL" id="CP002687">
    <property type="protein sequence ID" value="AEE86941.1"/>
    <property type="molecule type" value="Genomic_DNA"/>
</dbReference>
<dbReference type="EMBL" id="CP002687">
    <property type="protein sequence ID" value="AEE86942.1"/>
    <property type="molecule type" value="Genomic_DNA"/>
</dbReference>
<dbReference type="EMBL" id="AY062454">
    <property type="protein sequence ID" value="AAL32532.1"/>
    <property type="molecule type" value="mRNA"/>
</dbReference>
<dbReference type="EMBL" id="BT020368">
    <property type="protein sequence ID" value="AAV85723.1"/>
    <property type="molecule type" value="mRNA"/>
</dbReference>
<dbReference type="EMBL" id="BT021094">
    <property type="protein sequence ID" value="AAX12864.1"/>
    <property type="molecule type" value="mRNA"/>
</dbReference>
<dbReference type="PIR" id="T05680">
    <property type="entry name" value="T05680"/>
</dbReference>
<dbReference type="RefSeq" id="NP_195564.2">
    <property type="nucleotide sequence ID" value="NM_120013.6"/>
</dbReference>
<dbReference type="RefSeq" id="NP_974708.1">
    <property type="nucleotide sequence ID" value="NM_202979.1"/>
</dbReference>
<dbReference type="SMR" id="Q5PNS9"/>
<dbReference type="BioGRID" id="15289">
    <property type="interactions" value="3"/>
</dbReference>
<dbReference type="FunCoup" id="Q5PNS9">
    <property type="interactions" value="2853"/>
</dbReference>
<dbReference type="IntAct" id="Q5PNS9">
    <property type="interactions" value="2"/>
</dbReference>
<dbReference type="MINT" id="Q5PNS9"/>
<dbReference type="STRING" id="3702.Q5PNS9"/>
<dbReference type="PaxDb" id="3702-AT4G38520.2"/>
<dbReference type="ProteomicsDB" id="250971"/>
<dbReference type="EnsemblPlants" id="AT4G38520.1">
    <property type="protein sequence ID" value="AT4G38520.1"/>
    <property type="gene ID" value="AT4G38520"/>
</dbReference>
<dbReference type="EnsemblPlants" id="AT4G38520.2">
    <property type="protein sequence ID" value="AT4G38520.2"/>
    <property type="gene ID" value="AT4G38520"/>
</dbReference>
<dbReference type="GeneID" id="830009"/>
<dbReference type="Gramene" id="AT4G38520.1">
    <property type="protein sequence ID" value="AT4G38520.1"/>
    <property type="gene ID" value="AT4G38520"/>
</dbReference>
<dbReference type="Gramene" id="AT4G38520.2">
    <property type="protein sequence ID" value="AT4G38520.2"/>
    <property type="gene ID" value="AT4G38520"/>
</dbReference>
<dbReference type="KEGG" id="ath:AT4G38520"/>
<dbReference type="Araport" id="AT4G38520"/>
<dbReference type="TAIR" id="AT4G38520">
    <property type="gene designation" value="APD6"/>
</dbReference>
<dbReference type="eggNOG" id="KOG0700">
    <property type="taxonomic scope" value="Eukaryota"/>
</dbReference>
<dbReference type="HOGENOM" id="CLU_013173_2_0_1"/>
<dbReference type="InParanoid" id="Q5PNS9"/>
<dbReference type="OMA" id="NACLWPR"/>
<dbReference type="OrthoDB" id="420076at2759"/>
<dbReference type="PhylomeDB" id="Q5PNS9"/>
<dbReference type="PRO" id="PR:Q5PNS9"/>
<dbReference type="Proteomes" id="UP000006548">
    <property type="component" value="Chromosome 4"/>
</dbReference>
<dbReference type="ExpressionAtlas" id="Q5PNS9">
    <property type="expression patterns" value="baseline and differential"/>
</dbReference>
<dbReference type="GO" id="GO:0046872">
    <property type="term" value="F:metal ion binding"/>
    <property type="evidence" value="ECO:0007669"/>
    <property type="project" value="UniProtKB-KW"/>
</dbReference>
<dbReference type="GO" id="GO:0004722">
    <property type="term" value="F:protein serine/threonine phosphatase activity"/>
    <property type="evidence" value="ECO:0007669"/>
    <property type="project" value="UniProtKB-EC"/>
</dbReference>
<dbReference type="CDD" id="cd00143">
    <property type="entry name" value="PP2Cc"/>
    <property type="match status" value="1"/>
</dbReference>
<dbReference type="FunFam" id="3.60.40.10:FF:000008">
    <property type="entry name" value="Phosphatase 2C family protein"/>
    <property type="match status" value="1"/>
</dbReference>
<dbReference type="Gene3D" id="3.60.40.10">
    <property type="entry name" value="PPM-type phosphatase domain"/>
    <property type="match status" value="1"/>
</dbReference>
<dbReference type="InterPro" id="IPR015655">
    <property type="entry name" value="PP2C"/>
</dbReference>
<dbReference type="InterPro" id="IPR000222">
    <property type="entry name" value="PP2C_BS"/>
</dbReference>
<dbReference type="InterPro" id="IPR036457">
    <property type="entry name" value="PPM-type-like_dom_sf"/>
</dbReference>
<dbReference type="InterPro" id="IPR001932">
    <property type="entry name" value="PPM-type_phosphatase-like_dom"/>
</dbReference>
<dbReference type="PANTHER" id="PTHR47992">
    <property type="entry name" value="PROTEIN PHOSPHATASE"/>
    <property type="match status" value="1"/>
</dbReference>
<dbReference type="Pfam" id="PF00481">
    <property type="entry name" value="PP2C"/>
    <property type="match status" value="1"/>
</dbReference>
<dbReference type="SMART" id="SM00332">
    <property type="entry name" value="PP2Cc"/>
    <property type="match status" value="1"/>
</dbReference>
<dbReference type="SUPFAM" id="SSF81606">
    <property type="entry name" value="PP2C-like"/>
    <property type="match status" value="1"/>
</dbReference>
<dbReference type="PROSITE" id="PS01032">
    <property type="entry name" value="PPM_1"/>
    <property type="match status" value="1"/>
</dbReference>
<dbReference type="PROSITE" id="PS51746">
    <property type="entry name" value="PPM_2"/>
    <property type="match status" value="1"/>
</dbReference>
<name>P2C64_ARATH</name>
<sequence length="400" mass="44123">MLSGLMNFLNACLWPRSDQQARSASDSGGRQEGLLWFRDSGQHVFGDFSMAVVQANSLLEDQSQLESGSLSSHDSGPFGTFVGVYDGHGGPETSRFINDHMFHHLKRFTAEQQCMSSEVIKKAFQATEEGFLSIVTNQFQTRPQIATVGSCCLVSVICDGKLYVANAGDSRAVLGQVMRVTGEAHATQLSAEHNASIESVRRELQALHPDHPDIVVLKHNVWRVKGIIQVSRSIGDVYLKRSEFNREPLYAKFRLRSPFSKPLLSAEPAITVHTLEPHDQFIICASDGLWEHMSNQEAVDIVQNHPRNGIAKRLVKVALQEAAKKREMRYSDLKKIDRGVRRHFHDDITVIVVFFDTNLVSRGSMLRGPAVSVRGAGVNLPHNTLAPCTTPTQAAAAGAS</sequence>
<organism>
    <name type="scientific">Arabidopsis thaliana</name>
    <name type="common">Mouse-ear cress</name>
    <dbReference type="NCBI Taxonomy" id="3702"/>
    <lineage>
        <taxon>Eukaryota</taxon>
        <taxon>Viridiplantae</taxon>
        <taxon>Streptophyta</taxon>
        <taxon>Embryophyta</taxon>
        <taxon>Tracheophyta</taxon>
        <taxon>Spermatophyta</taxon>
        <taxon>Magnoliopsida</taxon>
        <taxon>eudicotyledons</taxon>
        <taxon>Gunneridae</taxon>
        <taxon>Pentapetalae</taxon>
        <taxon>rosids</taxon>
        <taxon>malvids</taxon>
        <taxon>Brassicales</taxon>
        <taxon>Brassicaceae</taxon>
        <taxon>Camelineae</taxon>
        <taxon>Arabidopsis</taxon>
    </lineage>
</organism>
<reference key="1">
    <citation type="journal article" date="1999" name="Nature">
        <title>Sequence and analysis of chromosome 4 of the plant Arabidopsis thaliana.</title>
        <authorList>
            <person name="Mayer K.F.X."/>
            <person name="Schueller C."/>
            <person name="Wambutt R."/>
            <person name="Murphy G."/>
            <person name="Volckaert G."/>
            <person name="Pohl T."/>
            <person name="Duesterhoeft A."/>
            <person name="Stiekema W."/>
            <person name="Entian K.-D."/>
            <person name="Terryn N."/>
            <person name="Harris B."/>
            <person name="Ansorge W."/>
            <person name="Brandt P."/>
            <person name="Grivell L.A."/>
            <person name="Rieger M."/>
            <person name="Weichselgartner M."/>
            <person name="de Simone V."/>
            <person name="Obermaier B."/>
            <person name="Mache R."/>
            <person name="Mueller M."/>
            <person name="Kreis M."/>
            <person name="Delseny M."/>
            <person name="Puigdomenech P."/>
            <person name="Watson M."/>
            <person name="Schmidtheini T."/>
            <person name="Reichert B."/>
            <person name="Portetelle D."/>
            <person name="Perez-Alonso M."/>
            <person name="Boutry M."/>
            <person name="Bancroft I."/>
            <person name="Vos P."/>
            <person name="Hoheisel J."/>
            <person name="Zimmermann W."/>
            <person name="Wedler H."/>
            <person name="Ridley P."/>
            <person name="Langham S.-A."/>
            <person name="McCullagh B."/>
            <person name="Bilham L."/>
            <person name="Robben J."/>
            <person name="van der Schueren J."/>
            <person name="Grymonprez B."/>
            <person name="Chuang Y.-J."/>
            <person name="Vandenbussche F."/>
            <person name="Braeken M."/>
            <person name="Weltjens I."/>
            <person name="Voet M."/>
            <person name="Bastiaens I."/>
            <person name="Aert R."/>
            <person name="Defoor E."/>
            <person name="Weitzenegger T."/>
            <person name="Bothe G."/>
            <person name="Ramsperger U."/>
            <person name="Hilbert H."/>
            <person name="Braun M."/>
            <person name="Holzer E."/>
            <person name="Brandt A."/>
            <person name="Peters S."/>
            <person name="van Staveren M."/>
            <person name="Dirkse W."/>
            <person name="Mooijman P."/>
            <person name="Klein Lankhorst R."/>
            <person name="Rose M."/>
            <person name="Hauf J."/>
            <person name="Koetter P."/>
            <person name="Berneiser S."/>
            <person name="Hempel S."/>
            <person name="Feldpausch M."/>
            <person name="Lamberth S."/>
            <person name="Van den Daele H."/>
            <person name="De Keyser A."/>
            <person name="Buysshaert C."/>
            <person name="Gielen J."/>
            <person name="Villarroel R."/>
            <person name="De Clercq R."/>
            <person name="van Montagu M."/>
            <person name="Rogers J."/>
            <person name="Cronin A."/>
            <person name="Quail M.A."/>
            <person name="Bray-Allen S."/>
            <person name="Clark L."/>
            <person name="Doggett J."/>
            <person name="Hall S."/>
            <person name="Kay M."/>
            <person name="Lennard N."/>
            <person name="McLay K."/>
            <person name="Mayes R."/>
            <person name="Pettett A."/>
            <person name="Rajandream M.A."/>
            <person name="Lyne M."/>
            <person name="Benes V."/>
            <person name="Rechmann S."/>
            <person name="Borkova D."/>
            <person name="Bloecker H."/>
            <person name="Scharfe M."/>
            <person name="Grimm M."/>
            <person name="Loehnert T.-H."/>
            <person name="Dose S."/>
            <person name="de Haan M."/>
            <person name="Maarse A.C."/>
            <person name="Schaefer M."/>
            <person name="Mueller-Auer S."/>
            <person name="Gabel C."/>
            <person name="Fuchs M."/>
            <person name="Fartmann B."/>
            <person name="Granderath K."/>
            <person name="Dauner D."/>
            <person name="Herzl A."/>
            <person name="Neumann S."/>
            <person name="Argiriou A."/>
            <person name="Vitale D."/>
            <person name="Liguori R."/>
            <person name="Piravandi E."/>
            <person name="Massenet O."/>
            <person name="Quigley F."/>
            <person name="Clabauld G."/>
            <person name="Muendlein A."/>
            <person name="Felber R."/>
            <person name="Schnabl S."/>
            <person name="Hiller R."/>
            <person name="Schmidt W."/>
            <person name="Lecharny A."/>
            <person name="Aubourg S."/>
            <person name="Chefdor F."/>
            <person name="Cooke R."/>
            <person name="Berger C."/>
            <person name="Monfort A."/>
            <person name="Casacuberta E."/>
            <person name="Gibbons T."/>
            <person name="Weber N."/>
            <person name="Vandenbol M."/>
            <person name="Bargues M."/>
            <person name="Terol J."/>
            <person name="Torres A."/>
            <person name="Perez-Perez A."/>
            <person name="Purnelle B."/>
            <person name="Bent E."/>
            <person name="Johnson S."/>
            <person name="Tacon D."/>
            <person name="Jesse T."/>
            <person name="Heijnen L."/>
            <person name="Schwarz S."/>
            <person name="Scholler P."/>
            <person name="Heber S."/>
            <person name="Francs P."/>
            <person name="Bielke C."/>
            <person name="Frishman D."/>
            <person name="Haase D."/>
            <person name="Lemcke K."/>
            <person name="Mewes H.-W."/>
            <person name="Stocker S."/>
            <person name="Zaccaria P."/>
            <person name="Bevan M."/>
            <person name="Wilson R.K."/>
            <person name="de la Bastide M."/>
            <person name="Habermann K."/>
            <person name="Parnell L."/>
            <person name="Dedhia N."/>
            <person name="Gnoj L."/>
            <person name="Schutz K."/>
            <person name="Huang E."/>
            <person name="Spiegel L."/>
            <person name="Sekhon M."/>
            <person name="Murray J."/>
            <person name="Sheet P."/>
            <person name="Cordes M."/>
            <person name="Abu-Threideh J."/>
            <person name="Stoneking T."/>
            <person name="Kalicki J."/>
            <person name="Graves T."/>
            <person name="Harmon G."/>
            <person name="Edwards J."/>
            <person name="Latreille P."/>
            <person name="Courtney L."/>
            <person name="Cloud J."/>
            <person name="Abbott A."/>
            <person name="Scott K."/>
            <person name="Johnson D."/>
            <person name="Minx P."/>
            <person name="Bentley D."/>
            <person name="Fulton B."/>
            <person name="Miller N."/>
            <person name="Greco T."/>
            <person name="Kemp K."/>
            <person name="Kramer J."/>
            <person name="Fulton L."/>
            <person name="Mardis E."/>
            <person name="Dante M."/>
            <person name="Pepin K."/>
            <person name="Hillier L.W."/>
            <person name="Nelson J."/>
            <person name="Spieth J."/>
            <person name="Ryan E."/>
            <person name="Andrews S."/>
            <person name="Geisel C."/>
            <person name="Layman D."/>
            <person name="Du H."/>
            <person name="Ali J."/>
            <person name="Berghoff A."/>
            <person name="Jones K."/>
            <person name="Drone K."/>
            <person name="Cotton M."/>
            <person name="Joshu C."/>
            <person name="Antonoiu B."/>
            <person name="Zidanic M."/>
            <person name="Strong C."/>
            <person name="Sun H."/>
            <person name="Lamar B."/>
            <person name="Yordan C."/>
            <person name="Ma P."/>
            <person name="Zhong J."/>
            <person name="Preston R."/>
            <person name="Vil D."/>
            <person name="Shekher M."/>
            <person name="Matero A."/>
            <person name="Shah R."/>
            <person name="Swaby I.K."/>
            <person name="O'Shaughnessy A."/>
            <person name="Rodriguez M."/>
            <person name="Hoffman J."/>
            <person name="Till S."/>
            <person name="Granat S."/>
            <person name="Shohdy N."/>
            <person name="Hasegawa A."/>
            <person name="Hameed A."/>
            <person name="Lodhi M."/>
            <person name="Johnson A."/>
            <person name="Chen E."/>
            <person name="Marra M.A."/>
            <person name="Martienssen R."/>
            <person name="McCombie W.R."/>
        </authorList>
    </citation>
    <scope>NUCLEOTIDE SEQUENCE [LARGE SCALE GENOMIC DNA]</scope>
    <source>
        <strain>cv. Columbia</strain>
    </source>
</reference>
<reference key="2">
    <citation type="journal article" date="2017" name="Plant J.">
        <title>Araport11: a complete reannotation of the Arabidopsis thaliana reference genome.</title>
        <authorList>
            <person name="Cheng C.Y."/>
            <person name="Krishnakumar V."/>
            <person name="Chan A.P."/>
            <person name="Thibaud-Nissen F."/>
            <person name="Schobel S."/>
            <person name="Town C.D."/>
        </authorList>
    </citation>
    <scope>GENOME REANNOTATION</scope>
    <source>
        <strain>cv. Columbia</strain>
    </source>
</reference>
<reference key="3">
    <citation type="journal article" date="2003" name="Science">
        <title>Empirical analysis of transcriptional activity in the Arabidopsis genome.</title>
        <authorList>
            <person name="Yamada K."/>
            <person name="Lim J."/>
            <person name="Dale J.M."/>
            <person name="Chen H."/>
            <person name="Shinn P."/>
            <person name="Palm C.J."/>
            <person name="Southwick A.M."/>
            <person name="Wu H.C."/>
            <person name="Kim C.J."/>
            <person name="Nguyen M."/>
            <person name="Pham P.K."/>
            <person name="Cheuk R.F."/>
            <person name="Karlin-Newmann G."/>
            <person name="Liu S.X."/>
            <person name="Lam B."/>
            <person name="Sakano H."/>
            <person name="Wu T."/>
            <person name="Yu G."/>
            <person name="Miranda M."/>
            <person name="Quach H.L."/>
            <person name="Tripp M."/>
            <person name="Chang C.H."/>
            <person name="Lee J.M."/>
            <person name="Toriumi M.J."/>
            <person name="Chan M.M."/>
            <person name="Tang C.C."/>
            <person name="Onodera C.S."/>
            <person name="Deng J.M."/>
            <person name="Akiyama K."/>
            <person name="Ansari Y."/>
            <person name="Arakawa T."/>
            <person name="Banh J."/>
            <person name="Banno F."/>
            <person name="Bowser L."/>
            <person name="Brooks S.Y."/>
            <person name="Carninci P."/>
            <person name="Chao Q."/>
            <person name="Choy N."/>
            <person name="Enju A."/>
            <person name="Goldsmith A.D."/>
            <person name="Gurjal M."/>
            <person name="Hansen N.F."/>
            <person name="Hayashizaki Y."/>
            <person name="Johnson-Hopson C."/>
            <person name="Hsuan V.W."/>
            <person name="Iida K."/>
            <person name="Karnes M."/>
            <person name="Khan S."/>
            <person name="Koesema E."/>
            <person name="Ishida J."/>
            <person name="Jiang P.X."/>
            <person name="Jones T."/>
            <person name="Kawai J."/>
            <person name="Kamiya A."/>
            <person name="Meyers C."/>
            <person name="Nakajima M."/>
            <person name="Narusaka M."/>
            <person name="Seki M."/>
            <person name="Sakurai T."/>
            <person name="Satou M."/>
            <person name="Tamse R."/>
            <person name="Vaysberg M."/>
            <person name="Wallender E.K."/>
            <person name="Wong C."/>
            <person name="Yamamura Y."/>
            <person name="Yuan S."/>
            <person name="Shinozaki K."/>
            <person name="Davis R.W."/>
            <person name="Theologis A."/>
            <person name="Ecker J.R."/>
        </authorList>
    </citation>
    <scope>NUCLEOTIDE SEQUENCE [LARGE SCALE MRNA]</scope>
    <source>
        <strain>cv. Columbia</strain>
    </source>
</reference>
<reference key="4">
    <citation type="submission" date="2005-02" db="EMBL/GenBank/DDBJ databases">
        <title>Arabidopsis ORF clones.</title>
        <authorList>
            <person name="Kim C.J."/>
            <person name="Chen H."/>
            <person name="Cheuk R.F."/>
            <person name="Shinn P."/>
            <person name="Ecker J.R."/>
        </authorList>
    </citation>
    <scope>NUCLEOTIDE SEQUENCE [LARGE SCALE MRNA]</scope>
    <source>
        <strain>cv. Columbia</strain>
    </source>
</reference>
<reference key="5">
    <citation type="journal article" date="2008" name="BMC Genomics">
        <title>Genome-wide and expression analysis of protein phosphatase 2C in rice and Arabidopsis.</title>
        <authorList>
            <person name="Xue T."/>
            <person name="Wang D."/>
            <person name="Zhang S."/>
            <person name="Ehlting J."/>
            <person name="Ni F."/>
            <person name="Jacab S."/>
            <person name="Zheng C."/>
            <person name="Zhong Y."/>
        </authorList>
    </citation>
    <scope>GENE FAMILY</scope>
    <scope>NOMENCLATURE</scope>
</reference>
<reference key="6">
    <citation type="journal article" date="2014" name="Plant Cell">
        <title>SAUR inhibition of PP2C-D phosphatases activates plasma membrane H+-ATPases to promote cell expansion in Arabidopsis.</title>
        <authorList>
            <person name="Spartz A.K."/>
            <person name="Ren H."/>
            <person name="Park M.Y."/>
            <person name="Grandt K.N."/>
            <person name="Lee S.H."/>
            <person name="Murphy A.S."/>
            <person name="Sussman M.R."/>
            <person name="Overvoorde P.J."/>
            <person name="Gray W.M."/>
        </authorList>
    </citation>
    <scope>FUNCTION</scope>
    <scope>DISRUPTION PHENOTYPE</scope>
    <scope>INTERACTION WITH SAUR19</scope>
    <scope>GENE FAMILY</scope>
    <scope>NOMENCLATURE</scope>
    <source>
        <strain>cv. Columbia</strain>
    </source>
</reference>
<comment type="function">
    <text evidence="4">Dephosphorylates and represses plasma membrane H(+)-ATPases (PM H(+)-ATPases, e.g. AHA1 and AHA2), thus influencing negatively plant growth and fitness.</text>
</comment>
<comment type="catalytic activity">
    <reaction evidence="2">
        <text>O-phospho-L-seryl-[protein] + H2O = L-seryl-[protein] + phosphate</text>
        <dbReference type="Rhea" id="RHEA:20629"/>
        <dbReference type="Rhea" id="RHEA-COMP:9863"/>
        <dbReference type="Rhea" id="RHEA-COMP:11604"/>
        <dbReference type="ChEBI" id="CHEBI:15377"/>
        <dbReference type="ChEBI" id="CHEBI:29999"/>
        <dbReference type="ChEBI" id="CHEBI:43474"/>
        <dbReference type="ChEBI" id="CHEBI:83421"/>
        <dbReference type="EC" id="3.1.3.16"/>
    </reaction>
</comment>
<comment type="catalytic activity">
    <reaction evidence="2">
        <text>O-phospho-L-threonyl-[protein] + H2O = L-threonyl-[protein] + phosphate</text>
        <dbReference type="Rhea" id="RHEA:47004"/>
        <dbReference type="Rhea" id="RHEA-COMP:11060"/>
        <dbReference type="Rhea" id="RHEA-COMP:11605"/>
        <dbReference type="ChEBI" id="CHEBI:15377"/>
        <dbReference type="ChEBI" id="CHEBI:30013"/>
        <dbReference type="ChEBI" id="CHEBI:43474"/>
        <dbReference type="ChEBI" id="CHEBI:61977"/>
        <dbReference type="EC" id="3.1.3.16"/>
    </reaction>
</comment>
<comment type="cofactor">
    <cofactor evidence="1">
        <name>Mg(2+)</name>
        <dbReference type="ChEBI" id="CHEBI:18420"/>
    </cofactor>
    <cofactor evidence="1">
        <name>Mn(2+)</name>
        <dbReference type="ChEBI" id="CHEBI:29035"/>
    </cofactor>
    <text evidence="1">Binds 2 magnesium or manganese ions per subunit.</text>
</comment>
<comment type="subunit">
    <text evidence="4">Interacts with SAUR19.</text>
</comment>
<comment type="disruption phenotype">
    <text evidence="4">Slight increase in hypocotyl length (PubMed:24858935). Plants missing PP2C42/PP2C-D2, PP2C64/PP2C-D5, PP2C79/PP2C-D7, PP2C63/PP2C-D8 and PP2C68/PP2C-D9 exhibit an increased hypocotyl length, as well as an enhanced sensitivity to LiCl and media acidification (PubMed:24858935).</text>
</comment>
<comment type="similarity">
    <text evidence="7">Belongs to the PP2C family.</text>
</comment>
<comment type="sequence caution" evidence="7">
    <conflict type="erroneous initiation">
        <sequence resource="EMBL-CDS" id="CAB37508"/>
    </conflict>
    <text>Truncated N-terminus.</text>
</comment>
<comment type="sequence caution" evidence="7">
    <conflict type="erroneous initiation">
        <sequence resource="EMBL-CDS" id="CAB80516"/>
    </conflict>
    <text>Truncated N-terminus.</text>
</comment>
<proteinExistence type="evidence at protein level"/>